<protein>
    <recommendedName>
        <fullName evidence="1">Large ribosomal subunit protein uL3</fullName>
    </recommendedName>
    <alternativeName>
        <fullName evidence="3">50S ribosomal protein L3</fullName>
    </alternativeName>
</protein>
<proteinExistence type="inferred from homology"/>
<organism>
    <name type="scientific">Bacillus velezensis (strain DSM 23117 / BGSC 10A6 / LMG 26770 / FZB42)</name>
    <name type="common">Bacillus amyloliquefaciens subsp. plantarum</name>
    <dbReference type="NCBI Taxonomy" id="326423"/>
    <lineage>
        <taxon>Bacteria</taxon>
        <taxon>Bacillati</taxon>
        <taxon>Bacillota</taxon>
        <taxon>Bacilli</taxon>
        <taxon>Bacillales</taxon>
        <taxon>Bacillaceae</taxon>
        <taxon>Bacillus</taxon>
        <taxon>Bacillus amyloliquefaciens group</taxon>
    </lineage>
</organism>
<keyword id="KW-0687">Ribonucleoprotein</keyword>
<keyword id="KW-0689">Ribosomal protein</keyword>
<keyword id="KW-0694">RNA-binding</keyword>
<keyword id="KW-0699">rRNA-binding</keyword>
<accession>A7Z0N8</accession>
<comment type="function">
    <text evidence="1">One of the primary rRNA binding proteins, it binds directly near the 3'-end of the 23S rRNA, where it nucleates assembly of the 50S subunit.</text>
</comment>
<comment type="subunit">
    <text evidence="1">Part of the 50S ribosomal subunit. Forms a cluster with proteins L14 and L19.</text>
</comment>
<comment type="similarity">
    <text evidence="1">Belongs to the universal ribosomal protein uL3 family.</text>
</comment>
<gene>
    <name evidence="1" type="primary">rplC</name>
    <name type="ordered locus">RBAM_001410</name>
</gene>
<dbReference type="EMBL" id="CP000560">
    <property type="protein sequence ID" value="ABS72564.1"/>
    <property type="molecule type" value="Genomic_DNA"/>
</dbReference>
<dbReference type="RefSeq" id="WP_007410402.1">
    <property type="nucleotide sequence ID" value="NC_009725.2"/>
</dbReference>
<dbReference type="SMR" id="A7Z0N8"/>
<dbReference type="GeneID" id="93079280"/>
<dbReference type="KEGG" id="bay:RBAM_001410"/>
<dbReference type="HOGENOM" id="CLU_044142_4_1_9"/>
<dbReference type="Proteomes" id="UP000001120">
    <property type="component" value="Chromosome"/>
</dbReference>
<dbReference type="GO" id="GO:0022625">
    <property type="term" value="C:cytosolic large ribosomal subunit"/>
    <property type="evidence" value="ECO:0007669"/>
    <property type="project" value="TreeGrafter"/>
</dbReference>
<dbReference type="GO" id="GO:0019843">
    <property type="term" value="F:rRNA binding"/>
    <property type="evidence" value="ECO:0007669"/>
    <property type="project" value="UniProtKB-UniRule"/>
</dbReference>
<dbReference type="GO" id="GO:0003735">
    <property type="term" value="F:structural constituent of ribosome"/>
    <property type="evidence" value="ECO:0007669"/>
    <property type="project" value="InterPro"/>
</dbReference>
<dbReference type="GO" id="GO:0006412">
    <property type="term" value="P:translation"/>
    <property type="evidence" value="ECO:0007669"/>
    <property type="project" value="UniProtKB-UniRule"/>
</dbReference>
<dbReference type="FunFam" id="2.40.30.10:FF:000004">
    <property type="entry name" value="50S ribosomal protein L3"/>
    <property type="match status" value="1"/>
</dbReference>
<dbReference type="FunFam" id="3.30.160.810:FF:000002">
    <property type="entry name" value="50S ribosomal protein L3"/>
    <property type="match status" value="1"/>
</dbReference>
<dbReference type="Gene3D" id="3.30.160.810">
    <property type="match status" value="1"/>
</dbReference>
<dbReference type="Gene3D" id="2.40.30.10">
    <property type="entry name" value="Translation factors"/>
    <property type="match status" value="1"/>
</dbReference>
<dbReference type="HAMAP" id="MF_01325_B">
    <property type="entry name" value="Ribosomal_uL3_B"/>
    <property type="match status" value="1"/>
</dbReference>
<dbReference type="InterPro" id="IPR000597">
    <property type="entry name" value="Ribosomal_uL3"/>
</dbReference>
<dbReference type="InterPro" id="IPR019927">
    <property type="entry name" value="Ribosomal_uL3_bac/org-type"/>
</dbReference>
<dbReference type="InterPro" id="IPR019926">
    <property type="entry name" value="Ribosomal_uL3_CS"/>
</dbReference>
<dbReference type="InterPro" id="IPR009000">
    <property type="entry name" value="Transl_B-barrel_sf"/>
</dbReference>
<dbReference type="NCBIfam" id="TIGR03625">
    <property type="entry name" value="L3_bact"/>
    <property type="match status" value="1"/>
</dbReference>
<dbReference type="PANTHER" id="PTHR11229">
    <property type="entry name" value="50S RIBOSOMAL PROTEIN L3"/>
    <property type="match status" value="1"/>
</dbReference>
<dbReference type="PANTHER" id="PTHR11229:SF16">
    <property type="entry name" value="LARGE RIBOSOMAL SUBUNIT PROTEIN UL3C"/>
    <property type="match status" value="1"/>
</dbReference>
<dbReference type="Pfam" id="PF00297">
    <property type="entry name" value="Ribosomal_L3"/>
    <property type="match status" value="1"/>
</dbReference>
<dbReference type="SUPFAM" id="SSF50447">
    <property type="entry name" value="Translation proteins"/>
    <property type="match status" value="1"/>
</dbReference>
<dbReference type="PROSITE" id="PS00474">
    <property type="entry name" value="RIBOSOMAL_L3"/>
    <property type="match status" value="1"/>
</dbReference>
<reference key="1">
    <citation type="journal article" date="2007" name="Nat. Biotechnol.">
        <title>Comparative analysis of the complete genome sequence of the plant growth-promoting bacterium Bacillus amyloliquefaciens FZB42.</title>
        <authorList>
            <person name="Chen X.H."/>
            <person name="Koumoutsi A."/>
            <person name="Scholz R."/>
            <person name="Eisenreich A."/>
            <person name="Schneider K."/>
            <person name="Heinemeyer I."/>
            <person name="Morgenstern B."/>
            <person name="Voss B."/>
            <person name="Hess W.R."/>
            <person name="Reva O."/>
            <person name="Junge H."/>
            <person name="Voigt B."/>
            <person name="Jungblut P.R."/>
            <person name="Vater J."/>
            <person name="Suessmuth R."/>
            <person name="Liesegang H."/>
            <person name="Strittmatter A."/>
            <person name="Gottschalk G."/>
            <person name="Borriss R."/>
        </authorList>
    </citation>
    <scope>NUCLEOTIDE SEQUENCE [LARGE SCALE GENOMIC DNA]</scope>
    <source>
        <strain>DSM 23117 / BGSC 10A6 / LMG 26770 / FZB42</strain>
    </source>
</reference>
<evidence type="ECO:0000255" key="1">
    <source>
        <dbReference type="HAMAP-Rule" id="MF_01325"/>
    </source>
</evidence>
<evidence type="ECO:0000256" key="2">
    <source>
        <dbReference type="SAM" id="MobiDB-lite"/>
    </source>
</evidence>
<evidence type="ECO:0000305" key="3"/>
<feature type="chain" id="PRO_1000052009" description="Large ribosomal subunit protein uL3">
    <location>
        <begin position="1"/>
        <end position="209"/>
    </location>
</feature>
<feature type="region of interest" description="Disordered" evidence="2">
    <location>
        <begin position="122"/>
        <end position="151"/>
    </location>
</feature>
<name>RL3_BACVZ</name>
<sequence length="209" mass="22711">MTKGILGRKIGMTQVFAENGDLIPVTVIEAAPNVVLQKKTAENDGYEAIQLGFDDKREKLSNKPEKGHVAKAETAPKRFVKELRGVDMDAYEIGQEVKVEIFSAGEIVDVTGVSKGKGFQGAIKRHGQSRGPMSHGSRYHRRPGSMGPVDPNRVFKGKLLPGRMGGDQITVQNLEIVKVDAERNLLLIKGNVPGARKTLITVKSAVKSK</sequence>